<organism>
    <name type="scientific">Shigella sonnei (strain Ss046)</name>
    <dbReference type="NCBI Taxonomy" id="300269"/>
    <lineage>
        <taxon>Bacteria</taxon>
        <taxon>Pseudomonadati</taxon>
        <taxon>Pseudomonadota</taxon>
        <taxon>Gammaproteobacteria</taxon>
        <taxon>Enterobacterales</taxon>
        <taxon>Enterobacteriaceae</taxon>
        <taxon>Shigella</taxon>
    </lineage>
</organism>
<accession>Q3YZN0</accession>
<keyword id="KW-0255">Endonuclease</keyword>
<keyword id="KW-0378">Hydrolase</keyword>
<keyword id="KW-0540">Nuclease</keyword>
<keyword id="KW-1185">Reference proteome</keyword>
<keyword id="KW-0694">RNA-binding</keyword>
<keyword id="KW-0699">rRNA-binding</keyword>
<protein>
    <recommendedName>
        <fullName evidence="1">Ribosome rescue factor SmrB</fullName>
        <ecNumber evidence="1">3.1.-.-</ecNumber>
    </recommendedName>
</protein>
<proteinExistence type="inferred from homology"/>
<evidence type="ECO:0000255" key="1">
    <source>
        <dbReference type="HAMAP-Rule" id="MF_01042"/>
    </source>
</evidence>
<dbReference type="EC" id="3.1.-.-" evidence="1"/>
<dbReference type="EMBL" id="CP000038">
    <property type="protein sequence ID" value="AAZ89031.1"/>
    <property type="molecule type" value="Genomic_DNA"/>
</dbReference>
<dbReference type="RefSeq" id="WP_000730800.1">
    <property type="nucleotide sequence ID" value="NC_007384.1"/>
</dbReference>
<dbReference type="SMR" id="Q3YZN0"/>
<dbReference type="KEGG" id="ssn:SSON_2388"/>
<dbReference type="HOGENOM" id="CLU_055978_4_0_6"/>
<dbReference type="Proteomes" id="UP000002529">
    <property type="component" value="Chromosome"/>
</dbReference>
<dbReference type="GO" id="GO:0004521">
    <property type="term" value="F:RNA endonuclease activity"/>
    <property type="evidence" value="ECO:0007669"/>
    <property type="project" value="UniProtKB-UniRule"/>
</dbReference>
<dbReference type="GO" id="GO:0019843">
    <property type="term" value="F:rRNA binding"/>
    <property type="evidence" value="ECO:0007669"/>
    <property type="project" value="UniProtKB-UniRule"/>
</dbReference>
<dbReference type="GO" id="GO:0072344">
    <property type="term" value="P:rescue of stalled ribosome"/>
    <property type="evidence" value="ECO:0007669"/>
    <property type="project" value="UniProtKB-UniRule"/>
</dbReference>
<dbReference type="Gene3D" id="3.30.1370.110">
    <property type="match status" value="1"/>
</dbReference>
<dbReference type="HAMAP" id="MF_01042">
    <property type="entry name" value="SmrB"/>
    <property type="match status" value="1"/>
</dbReference>
<dbReference type="InterPro" id="IPR002625">
    <property type="entry name" value="Smr_dom"/>
</dbReference>
<dbReference type="InterPro" id="IPR036063">
    <property type="entry name" value="Smr_dom_sf"/>
</dbReference>
<dbReference type="InterPro" id="IPR022990">
    <property type="entry name" value="SmrB-like"/>
</dbReference>
<dbReference type="NCBIfam" id="NF003432">
    <property type="entry name" value="PRK04946.1"/>
    <property type="match status" value="1"/>
</dbReference>
<dbReference type="PANTHER" id="PTHR35562">
    <property type="entry name" value="DNA ENDONUCLEASE SMRA-RELATED"/>
    <property type="match status" value="1"/>
</dbReference>
<dbReference type="PANTHER" id="PTHR35562:SF1">
    <property type="entry name" value="UPF0115 PROTEIN YFCN"/>
    <property type="match status" value="1"/>
</dbReference>
<dbReference type="Pfam" id="PF01713">
    <property type="entry name" value="Smr"/>
    <property type="match status" value="1"/>
</dbReference>
<dbReference type="SMART" id="SM00463">
    <property type="entry name" value="SMR"/>
    <property type="match status" value="1"/>
</dbReference>
<dbReference type="SUPFAM" id="SSF160443">
    <property type="entry name" value="SMR domain-like"/>
    <property type="match status" value="1"/>
</dbReference>
<dbReference type="PROSITE" id="PS50828">
    <property type="entry name" value="SMR"/>
    <property type="match status" value="1"/>
</dbReference>
<comment type="function">
    <text evidence="1">Acts as a ribosome collision sensor. Detects stalled/collided disomes (pairs of ribosomes where the leading ribosome is stalled and a second ribosome has collided with it) and endonucleolytically cleaves mRNA at the 5' boundary of the stalled ribosome. Stalled/collided disomes form a new interface (primarily via the 30S subunits) that binds SmrB. Cleaved mRNA becomes available for tmRNA ligation, leading to ribosomal subunit dissociation and rescue of stalled ribosomes.</text>
</comment>
<comment type="subunit">
    <text evidence="1">Associates with collided ribosomes, but not with correctly translating polysomes.</text>
</comment>
<comment type="similarity">
    <text evidence="1">Belongs to the SmrB family.</text>
</comment>
<reference key="1">
    <citation type="journal article" date="2005" name="Nucleic Acids Res.">
        <title>Genome dynamics and diversity of Shigella species, the etiologic agents of bacillary dysentery.</title>
        <authorList>
            <person name="Yang F."/>
            <person name="Yang J."/>
            <person name="Zhang X."/>
            <person name="Chen L."/>
            <person name="Jiang Y."/>
            <person name="Yan Y."/>
            <person name="Tang X."/>
            <person name="Wang J."/>
            <person name="Xiong Z."/>
            <person name="Dong J."/>
            <person name="Xue Y."/>
            <person name="Zhu Y."/>
            <person name="Xu X."/>
            <person name="Sun L."/>
            <person name="Chen S."/>
            <person name="Nie H."/>
            <person name="Peng J."/>
            <person name="Xu J."/>
            <person name="Wang Y."/>
            <person name="Yuan Z."/>
            <person name="Wen Y."/>
            <person name="Yao Z."/>
            <person name="Shen Y."/>
            <person name="Qiang B."/>
            <person name="Hou Y."/>
            <person name="Yu J."/>
            <person name="Jin Q."/>
        </authorList>
    </citation>
    <scope>NUCLEOTIDE SEQUENCE [LARGE SCALE GENOMIC DNA]</scope>
    <source>
        <strain>Ss046</strain>
    </source>
</reference>
<sequence length="183" mass="20982">MKKKTTLSEEDQALFRQLMAGTRKIKQDTIVHRPQRKKISEVPVKRLIPEQADASHYFSDEFQPLLNTEGPVKYVRPDVSHFEAKKLRRGDYSPELFLDLHGLTQLQAKQELGALIAACRREHVFCACVMHGHGKHILKQQTPLWLAQHPHVMAFHQAPKEYGGDAALLVLIEVEEWLPPELP</sequence>
<gene>
    <name evidence="1" type="primary">smrB</name>
    <name type="ordered locus">SSON_2388</name>
</gene>
<name>SMRB_SHISS</name>
<feature type="chain" id="PRO_1000084368" description="Ribosome rescue factor SmrB">
    <location>
        <begin position="1"/>
        <end position="183"/>
    </location>
</feature>
<feature type="domain" description="Smr" evidence="1">
    <location>
        <begin position="98"/>
        <end position="173"/>
    </location>
</feature>